<sequence>MPKSVIIPAGSSAPLAPFVPGTLADGVVYVSGTLAFDQHNNVLFADDPKAQTRHVLETIRKVIETAGGTMADVTFNSIFITDWKNYAAINEIYAEFFPGDKPARFCIQCGLVKPDALVEIATIAHIAK</sequence>
<organism>
    <name type="scientific">Escherichia coli (strain K12 / DH10B)</name>
    <dbReference type="NCBI Taxonomy" id="316385"/>
    <lineage>
        <taxon>Bacteria</taxon>
        <taxon>Pseudomonadati</taxon>
        <taxon>Pseudomonadota</taxon>
        <taxon>Gammaproteobacteria</taxon>
        <taxon>Enterobacterales</taxon>
        <taxon>Enterobacteriaceae</taxon>
        <taxon>Escherichia</taxon>
    </lineage>
</organism>
<dbReference type="EC" id="3.5.-.-" evidence="1"/>
<dbReference type="EMBL" id="CP000948">
    <property type="protein sequence ID" value="ACB02211.1"/>
    <property type="molecule type" value="Genomic_DNA"/>
</dbReference>
<dbReference type="RefSeq" id="WP_001126780.1">
    <property type="nucleotide sequence ID" value="NC_010473.1"/>
</dbReference>
<dbReference type="SMR" id="B1X9D1"/>
<dbReference type="GeneID" id="75171086"/>
<dbReference type="KEGG" id="ecd:ECDH10B_1082"/>
<dbReference type="HOGENOM" id="CLU_100715_7_3_6"/>
<dbReference type="GO" id="GO:0005829">
    <property type="term" value="C:cytosol"/>
    <property type="evidence" value="ECO:0007669"/>
    <property type="project" value="TreeGrafter"/>
</dbReference>
<dbReference type="GO" id="GO:0019239">
    <property type="term" value="F:deaminase activity"/>
    <property type="evidence" value="ECO:0007669"/>
    <property type="project" value="TreeGrafter"/>
</dbReference>
<dbReference type="GO" id="GO:0019740">
    <property type="term" value="P:nitrogen utilization"/>
    <property type="evidence" value="ECO:0007669"/>
    <property type="project" value="UniProtKB-UniRule"/>
</dbReference>
<dbReference type="GO" id="GO:0006212">
    <property type="term" value="P:uracil catabolic process"/>
    <property type="evidence" value="ECO:0007669"/>
    <property type="project" value="UniProtKB-UniRule"/>
</dbReference>
<dbReference type="CDD" id="cd00448">
    <property type="entry name" value="YjgF_YER057c_UK114_family"/>
    <property type="match status" value="1"/>
</dbReference>
<dbReference type="FunFam" id="3.30.1330.40:FF:000003">
    <property type="entry name" value="Putative aminoacrylate peracid reductase RutC"/>
    <property type="match status" value="1"/>
</dbReference>
<dbReference type="Gene3D" id="3.30.1330.40">
    <property type="entry name" value="RutC-like"/>
    <property type="match status" value="1"/>
</dbReference>
<dbReference type="HAMAP" id="MF_00831">
    <property type="entry name" value="RutC"/>
    <property type="match status" value="1"/>
</dbReference>
<dbReference type="InterPro" id="IPR019897">
    <property type="entry name" value="RidA_CS"/>
</dbReference>
<dbReference type="InterPro" id="IPR019898">
    <property type="entry name" value="RutC"/>
</dbReference>
<dbReference type="InterPro" id="IPR035959">
    <property type="entry name" value="RutC-like_sf"/>
</dbReference>
<dbReference type="InterPro" id="IPR006175">
    <property type="entry name" value="YjgF/YER057c/UK114"/>
</dbReference>
<dbReference type="NCBIfam" id="TIGR03610">
    <property type="entry name" value="RutC"/>
    <property type="match status" value="1"/>
</dbReference>
<dbReference type="PANTHER" id="PTHR11803">
    <property type="entry name" value="2-IMINOBUTANOATE/2-IMINOPROPANOATE DEAMINASE RIDA"/>
    <property type="match status" value="1"/>
</dbReference>
<dbReference type="PANTHER" id="PTHR11803:SF58">
    <property type="entry name" value="PROTEIN HMF1-RELATED"/>
    <property type="match status" value="1"/>
</dbReference>
<dbReference type="Pfam" id="PF01042">
    <property type="entry name" value="Ribonuc_L-PSP"/>
    <property type="match status" value="1"/>
</dbReference>
<dbReference type="SUPFAM" id="SSF55298">
    <property type="entry name" value="YjgF-like"/>
    <property type="match status" value="1"/>
</dbReference>
<dbReference type="PROSITE" id="PS01094">
    <property type="entry name" value="UPF0076"/>
    <property type="match status" value="1"/>
</dbReference>
<feature type="chain" id="PRO_0000402727" description="3-aminoacrylate deaminase RutC">
    <location>
        <begin position="1"/>
        <end position="128"/>
    </location>
</feature>
<name>RUTC_ECODH</name>
<keyword id="KW-0378">Hydrolase</keyword>
<comment type="function">
    <text evidence="1">Involved in pyrimidine catabolism. Catalyzes the deamination of 3-aminoacrylate to malonic semialdehyde, a reaction that can also occur spontaneously. RutC may facilitate the reaction and modulate the metabolic fitness, rather than catalyzing essential functions.</text>
</comment>
<comment type="catalytic activity">
    <reaction evidence="1">
        <text>(Z)-3-aminoacrylate + H2O + H(+) = 3-oxopropanoate + NH4(+)</text>
        <dbReference type="Rhea" id="RHEA:34947"/>
        <dbReference type="ChEBI" id="CHEBI:15377"/>
        <dbReference type="ChEBI" id="CHEBI:15378"/>
        <dbReference type="ChEBI" id="CHEBI:28938"/>
        <dbReference type="ChEBI" id="CHEBI:33190"/>
        <dbReference type="ChEBI" id="CHEBI:59894"/>
    </reaction>
</comment>
<comment type="subunit">
    <text evidence="1">Homotrimer.</text>
</comment>
<comment type="similarity">
    <text evidence="1">Belongs to the RutC family.</text>
</comment>
<evidence type="ECO:0000255" key="1">
    <source>
        <dbReference type="HAMAP-Rule" id="MF_00831"/>
    </source>
</evidence>
<accession>B1X9D1</accession>
<reference key="1">
    <citation type="journal article" date="2008" name="J. Bacteriol.">
        <title>The complete genome sequence of Escherichia coli DH10B: insights into the biology of a laboratory workhorse.</title>
        <authorList>
            <person name="Durfee T."/>
            <person name="Nelson R."/>
            <person name="Baldwin S."/>
            <person name="Plunkett G. III"/>
            <person name="Burland V."/>
            <person name="Mau B."/>
            <person name="Petrosino J.F."/>
            <person name="Qin X."/>
            <person name="Muzny D.M."/>
            <person name="Ayele M."/>
            <person name="Gibbs R.A."/>
            <person name="Csorgo B."/>
            <person name="Posfai G."/>
            <person name="Weinstock G.M."/>
            <person name="Blattner F.R."/>
        </authorList>
    </citation>
    <scope>NUCLEOTIDE SEQUENCE [LARGE SCALE GENOMIC DNA]</scope>
    <source>
        <strain>K12 / DH10B</strain>
    </source>
</reference>
<proteinExistence type="inferred from homology"/>
<protein>
    <recommendedName>
        <fullName evidence="1">3-aminoacrylate deaminase RutC</fullName>
        <shortName evidence="1">3-AA deaminase</shortName>
        <ecNumber evidence="1">3.5.-.-</ecNumber>
    </recommendedName>
</protein>
<gene>
    <name evidence="1" type="primary">rutC</name>
    <name type="ordered locus">ECDH10B_1082</name>
</gene>